<dbReference type="EC" id="2.1.1.33" evidence="2"/>
<dbReference type="EMBL" id="AM295250">
    <property type="protein sequence ID" value="CAL28259.1"/>
    <property type="molecule type" value="Genomic_DNA"/>
</dbReference>
<dbReference type="RefSeq" id="WP_015900599.1">
    <property type="nucleotide sequence ID" value="NC_012121.1"/>
</dbReference>
<dbReference type="SMR" id="B9DN65"/>
<dbReference type="GeneID" id="93793773"/>
<dbReference type="KEGG" id="sca:SCA_1355"/>
<dbReference type="eggNOG" id="COG0220">
    <property type="taxonomic scope" value="Bacteria"/>
</dbReference>
<dbReference type="HOGENOM" id="CLU_050910_2_1_9"/>
<dbReference type="OrthoDB" id="9802090at2"/>
<dbReference type="BioCyc" id="SCAR396513:SCA_RS06730-MONOMER"/>
<dbReference type="UniPathway" id="UPA00989"/>
<dbReference type="Proteomes" id="UP000000444">
    <property type="component" value="Chromosome"/>
</dbReference>
<dbReference type="GO" id="GO:0043527">
    <property type="term" value="C:tRNA methyltransferase complex"/>
    <property type="evidence" value="ECO:0007669"/>
    <property type="project" value="TreeGrafter"/>
</dbReference>
<dbReference type="GO" id="GO:0008176">
    <property type="term" value="F:tRNA (guanine(46)-N7)-methyltransferase activity"/>
    <property type="evidence" value="ECO:0007669"/>
    <property type="project" value="UniProtKB-UniRule"/>
</dbReference>
<dbReference type="CDD" id="cd02440">
    <property type="entry name" value="AdoMet_MTases"/>
    <property type="match status" value="1"/>
</dbReference>
<dbReference type="FunFam" id="3.40.50.150:FF:000035">
    <property type="entry name" value="tRNA (guanine-N(7)-)-methyltransferase"/>
    <property type="match status" value="1"/>
</dbReference>
<dbReference type="Gene3D" id="3.40.50.150">
    <property type="entry name" value="Vaccinia Virus protein VP39"/>
    <property type="match status" value="1"/>
</dbReference>
<dbReference type="HAMAP" id="MF_01057">
    <property type="entry name" value="tRNA_methyltr_TrmB"/>
    <property type="match status" value="1"/>
</dbReference>
<dbReference type="InterPro" id="IPR029063">
    <property type="entry name" value="SAM-dependent_MTases_sf"/>
</dbReference>
<dbReference type="InterPro" id="IPR003358">
    <property type="entry name" value="tRNA_(Gua-N-7)_MeTrfase_Trmb"/>
</dbReference>
<dbReference type="InterPro" id="IPR055361">
    <property type="entry name" value="tRNA_methyltr_TrmB_bact"/>
</dbReference>
<dbReference type="NCBIfam" id="NF001080">
    <property type="entry name" value="PRK00121.2-2"/>
    <property type="match status" value="1"/>
</dbReference>
<dbReference type="NCBIfam" id="TIGR00091">
    <property type="entry name" value="tRNA (guanosine(46)-N7)-methyltransferase TrmB"/>
    <property type="match status" value="1"/>
</dbReference>
<dbReference type="PANTHER" id="PTHR23417">
    <property type="entry name" value="3-DEOXY-D-MANNO-OCTULOSONIC-ACID TRANSFERASE/TRNA GUANINE-N 7 - -METHYLTRANSFERASE"/>
    <property type="match status" value="1"/>
</dbReference>
<dbReference type="PANTHER" id="PTHR23417:SF14">
    <property type="entry name" value="PENTACOTRIPEPTIDE-REPEAT REGION OF PRORP DOMAIN-CONTAINING PROTEIN"/>
    <property type="match status" value="1"/>
</dbReference>
<dbReference type="Pfam" id="PF02390">
    <property type="entry name" value="Methyltransf_4"/>
    <property type="match status" value="1"/>
</dbReference>
<dbReference type="SUPFAM" id="SSF53335">
    <property type="entry name" value="S-adenosyl-L-methionine-dependent methyltransferases"/>
    <property type="match status" value="1"/>
</dbReference>
<dbReference type="PROSITE" id="PS51625">
    <property type="entry name" value="SAM_MT_TRMB"/>
    <property type="match status" value="1"/>
</dbReference>
<organism>
    <name type="scientific">Staphylococcus carnosus (strain TM300)</name>
    <dbReference type="NCBI Taxonomy" id="396513"/>
    <lineage>
        <taxon>Bacteria</taxon>
        <taxon>Bacillati</taxon>
        <taxon>Bacillota</taxon>
        <taxon>Bacilli</taxon>
        <taxon>Bacillales</taxon>
        <taxon>Staphylococcaceae</taxon>
        <taxon>Staphylococcus</taxon>
    </lineage>
</organism>
<feature type="chain" id="PRO_1000149663" description="tRNA (guanine-N(7)-)-methyltransferase">
    <location>
        <begin position="1"/>
        <end position="211"/>
    </location>
</feature>
<feature type="active site" evidence="1">
    <location>
        <position position="117"/>
    </location>
</feature>
<feature type="binding site" evidence="2">
    <location>
        <position position="43"/>
    </location>
    <ligand>
        <name>S-adenosyl-L-methionine</name>
        <dbReference type="ChEBI" id="CHEBI:59789"/>
    </ligand>
</feature>
<feature type="binding site" evidence="2">
    <location>
        <position position="68"/>
    </location>
    <ligand>
        <name>S-adenosyl-L-methionine</name>
        <dbReference type="ChEBI" id="CHEBI:59789"/>
    </ligand>
</feature>
<feature type="binding site" evidence="2">
    <location>
        <position position="95"/>
    </location>
    <ligand>
        <name>S-adenosyl-L-methionine</name>
        <dbReference type="ChEBI" id="CHEBI:59789"/>
    </ligand>
</feature>
<feature type="binding site" evidence="2">
    <location>
        <position position="117"/>
    </location>
    <ligand>
        <name>S-adenosyl-L-methionine</name>
        <dbReference type="ChEBI" id="CHEBI:59789"/>
    </ligand>
</feature>
<feature type="binding site" evidence="2">
    <location>
        <position position="121"/>
    </location>
    <ligand>
        <name>substrate</name>
    </ligand>
</feature>
<feature type="binding site" evidence="2">
    <location>
        <position position="153"/>
    </location>
    <ligand>
        <name>substrate</name>
    </ligand>
</feature>
<feature type="binding site" evidence="2">
    <location>
        <begin position="190"/>
        <end position="193"/>
    </location>
    <ligand>
        <name>substrate</name>
    </ligand>
</feature>
<evidence type="ECO:0000250" key="1"/>
<evidence type="ECO:0000255" key="2">
    <source>
        <dbReference type="HAMAP-Rule" id="MF_01057"/>
    </source>
</evidence>
<proteinExistence type="inferred from homology"/>
<reference key="1">
    <citation type="journal article" date="2009" name="Appl. Environ. Microbiol.">
        <title>Genome analysis of the meat starter culture bacterium Staphylococcus carnosus TM300.</title>
        <authorList>
            <person name="Rosenstein R."/>
            <person name="Nerz C."/>
            <person name="Biswas L."/>
            <person name="Resch A."/>
            <person name="Raddatz G."/>
            <person name="Schuster S.C."/>
            <person name="Goetz F."/>
        </authorList>
    </citation>
    <scope>NUCLEOTIDE SEQUENCE [LARGE SCALE GENOMIC DNA]</scope>
    <source>
        <strain>TM300</strain>
    </source>
</reference>
<keyword id="KW-0489">Methyltransferase</keyword>
<keyword id="KW-1185">Reference proteome</keyword>
<keyword id="KW-0949">S-adenosyl-L-methionine</keyword>
<keyword id="KW-0808">Transferase</keyword>
<keyword id="KW-0819">tRNA processing</keyword>
<protein>
    <recommendedName>
        <fullName evidence="2">tRNA (guanine-N(7)-)-methyltransferase</fullName>
        <ecNumber evidence="2">2.1.1.33</ecNumber>
    </recommendedName>
    <alternativeName>
        <fullName evidence="2">tRNA (guanine(46)-N(7))-methyltransferase</fullName>
    </alternativeName>
    <alternativeName>
        <fullName evidence="2">tRNA(m7G46)-methyltransferase</fullName>
    </alternativeName>
</protein>
<comment type="function">
    <text evidence="2">Catalyzes the formation of N(7)-methylguanine at position 46 (m7G46) in tRNA.</text>
</comment>
<comment type="catalytic activity">
    <reaction evidence="2">
        <text>guanosine(46) in tRNA + S-adenosyl-L-methionine = N(7)-methylguanosine(46) in tRNA + S-adenosyl-L-homocysteine</text>
        <dbReference type="Rhea" id="RHEA:42708"/>
        <dbReference type="Rhea" id="RHEA-COMP:10188"/>
        <dbReference type="Rhea" id="RHEA-COMP:10189"/>
        <dbReference type="ChEBI" id="CHEBI:57856"/>
        <dbReference type="ChEBI" id="CHEBI:59789"/>
        <dbReference type="ChEBI" id="CHEBI:74269"/>
        <dbReference type="ChEBI" id="CHEBI:74480"/>
        <dbReference type="EC" id="2.1.1.33"/>
    </reaction>
</comment>
<comment type="pathway">
    <text evidence="2">tRNA modification; N(7)-methylguanine-tRNA biosynthesis.</text>
</comment>
<comment type="similarity">
    <text evidence="2">Belongs to the class I-like SAM-binding methyltransferase superfamily. TrmB family.</text>
</comment>
<gene>
    <name evidence="2" type="primary">trmB</name>
    <name type="ordered locus">Sca_1355</name>
</gene>
<accession>B9DN65</accession>
<name>TRMB_STACT</name>
<sequence>MRLRNKPWAEDYLRKHNTVVDLDGTHAGKMSEWFEKDQPIYIEVGSGMGQFITELAAQHPEVNFVSLERDKNVMIRVLDKVLEKDLQNIKLICNDAMELTDYFKDGEVDRVYLNFSDPWPKKRHAKRRLTYHSFLALYKAILKDEGEIHFKTDNRGLFAYSLESMSQFGMYFTKINLNLHDEDDEDNIETEYELKFADKGSRIYRMEAKFH</sequence>